<organism>
    <name type="scientific">Synechococcus sp. (strain CC9605)</name>
    <dbReference type="NCBI Taxonomy" id="110662"/>
    <lineage>
        <taxon>Bacteria</taxon>
        <taxon>Bacillati</taxon>
        <taxon>Cyanobacteriota</taxon>
        <taxon>Cyanophyceae</taxon>
        <taxon>Synechococcales</taxon>
        <taxon>Synechococcaceae</taxon>
        <taxon>Synechococcus</taxon>
    </lineage>
</organism>
<evidence type="ECO:0000255" key="1">
    <source>
        <dbReference type="HAMAP-Rule" id="MF_00005"/>
    </source>
</evidence>
<feature type="chain" id="PRO_0000263982" description="Argininosuccinate synthase">
    <location>
        <begin position="1"/>
        <end position="403"/>
    </location>
</feature>
<feature type="binding site" evidence="1">
    <location>
        <begin position="10"/>
        <end position="18"/>
    </location>
    <ligand>
        <name>ATP</name>
        <dbReference type="ChEBI" id="CHEBI:30616"/>
    </ligand>
</feature>
<feature type="binding site" evidence="1">
    <location>
        <position position="38"/>
    </location>
    <ligand>
        <name>ATP</name>
        <dbReference type="ChEBI" id="CHEBI:30616"/>
    </ligand>
</feature>
<feature type="binding site" evidence="1">
    <location>
        <position position="89"/>
    </location>
    <ligand>
        <name>L-citrulline</name>
        <dbReference type="ChEBI" id="CHEBI:57743"/>
    </ligand>
</feature>
<feature type="binding site" evidence="1">
    <location>
        <position position="119"/>
    </location>
    <ligand>
        <name>ATP</name>
        <dbReference type="ChEBI" id="CHEBI:30616"/>
    </ligand>
</feature>
<feature type="binding site" evidence="1">
    <location>
        <position position="121"/>
    </location>
    <ligand>
        <name>L-aspartate</name>
        <dbReference type="ChEBI" id="CHEBI:29991"/>
    </ligand>
</feature>
<feature type="binding site" evidence="1">
    <location>
        <position position="125"/>
    </location>
    <ligand>
        <name>L-aspartate</name>
        <dbReference type="ChEBI" id="CHEBI:29991"/>
    </ligand>
</feature>
<feature type="binding site" evidence="1">
    <location>
        <position position="125"/>
    </location>
    <ligand>
        <name>L-citrulline</name>
        <dbReference type="ChEBI" id="CHEBI:57743"/>
    </ligand>
</feature>
<feature type="binding site" evidence="1">
    <location>
        <position position="126"/>
    </location>
    <ligand>
        <name>L-aspartate</name>
        <dbReference type="ChEBI" id="CHEBI:29991"/>
    </ligand>
</feature>
<feature type="binding site" evidence="1">
    <location>
        <position position="129"/>
    </location>
    <ligand>
        <name>L-citrulline</name>
        <dbReference type="ChEBI" id="CHEBI:57743"/>
    </ligand>
</feature>
<feature type="binding site" evidence="1">
    <location>
        <position position="177"/>
    </location>
    <ligand>
        <name>L-citrulline</name>
        <dbReference type="ChEBI" id="CHEBI:57743"/>
    </ligand>
</feature>
<feature type="binding site" evidence="1">
    <location>
        <position position="186"/>
    </location>
    <ligand>
        <name>L-citrulline</name>
        <dbReference type="ChEBI" id="CHEBI:57743"/>
    </ligand>
</feature>
<feature type="binding site" evidence="1">
    <location>
        <position position="262"/>
    </location>
    <ligand>
        <name>L-citrulline</name>
        <dbReference type="ChEBI" id="CHEBI:57743"/>
    </ligand>
</feature>
<feature type="binding site" evidence="1">
    <location>
        <position position="274"/>
    </location>
    <ligand>
        <name>L-citrulline</name>
        <dbReference type="ChEBI" id="CHEBI:57743"/>
    </ligand>
</feature>
<keyword id="KW-0028">Amino-acid biosynthesis</keyword>
<keyword id="KW-0055">Arginine biosynthesis</keyword>
<keyword id="KW-0067">ATP-binding</keyword>
<keyword id="KW-0963">Cytoplasm</keyword>
<keyword id="KW-0436">Ligase</keyword>
<keyword id="KW-0547">Nucleotide-binding</keyword>
<proteinExistence type="inferred from homology"/>
<name>ASSY_SYNSC</name>
<protein>
    <recommendedName>
        <fullName evidence="1">Argininosuccinate synthase</fullName>
        <ecNumber evidence="1">6.3.4.5</ecNumber>
    </recommendedName>
    <alternativeName>
        <fullName evidence="1">Citrulline--aspartate ligase</fullName>
    </alternativeName>
</protein>
<sequence length="403" mass="43864">MGRAKKVVLAYSGGVDTSVCIPYLKQEWGVEDVITFAADLGQGDELEPIRQKALDAGASQSLVGDLIEPFIKDFAFPAIRANALYEGRYPLSTALARPLIAKRLVEVAREVGADAVAHGCTGKGNDQVRFDVAIAALAPDLKVLTPAREWGMSREETIAYGERFGLPAPVSKKSPYSIDLNLLGRSIEAGPLEDPMVAPPEEVFAMTRSVEAAPDASEEIEIAFEAGNPVGINGQKLDPVALIREANRLAGIHGIGRLDMIENRVVGIKSREIYETPGLLLFIQAHQELESLTLAADVLRSKRQLEMQWADLVYQGLWFGPLKDALDGFMDRTQATVNGVVRLRLHKGTATVTGRGSADSSLYVPEMASYGSEDQFDHRAAEGFIYVWGLPTRLWSASQRRSS</sequence>
<accession>Q3AG78</accession>
<comment type="catalytic activity">
    <reaction evidence="1">
        <text>L-citrulline + L-aspartate + ATP = 2-(N(omega)-L-arginino)succinate + AMP + diphosphate + H(+)</text>
        <dbReference type="Rhea" id="RHEA:10932"/>
        <dbReference type="ChEBI" id="CHEBI:15378"/>
        <dbReference type="ChEBI" id="CHEBI:29991"/>
        <dbReference type="ChEBI" id="CHEBI:30616"/>
        <dbReference type="ChEBI" id="CHEBI:33019"/>
        <dbReference type="ChEBI" id="CHEBI:57472"/>
        <dbReference type="ChEBI" id="CHEBI:57743"/>
        <dbReference type="ChEBI" id="CHEBI:456215"/>
        <dbReference type="EC" id="6.3.4.5"/>
    </reaction>
</comment>
<comment type="pathway">
    <text evidence="1">Amino-acid biosynthesis; L-arginine biosynthesis; L-arginine from L-ornithine and carbamoyl phosphate: step 2/3.</text>
</comment>
<comment type="subunit">
    <text evidence="1">Homotetramer.</text>
</comment>
<comment type="subcellular location">
    <subcellularLocation>
        <location evidence="1">Cytoplasm</location>
    </subcellularLocation>
</comment>
<comment type="similarity">
    <text evidence="1">Belongs to the argininosuccinate synthase family. Type 1 subfamily.</text>
</comment>
<reference key="1">
    <citation type="submission" date="2005-07" db="EMBL/GenBank/DDBJ databases">
        <title>Complete sequence of Synechococcus sp. CC9605.</title>
        <authorList>
            <consortium name="US DOE Joint Genome Institute"/>
            <person name="Copeland A."/>
            <person name="Lucas S."/>
            <person name="Lapidus A."/>
            <person name="Barry K."/>
            <person name="Detter J.C."/>
            <person name="Glavina T."/>
            <person name="Hammon N."/>
            <person name="Israni S."/>
            <person name="Pitluck S."/>
            <person name="Schmutz J."/>
            <person name="Martinez M."/>
            <person name="Larimer F."/>
            <person name="Land M."/>
            <person name="Kyrpides N."/>
            <person name="Ivanova N."/>
            <person name="Richardson P."/>
        </authorList>
    </citation>
    <scope>NUCLEOTIDE SEQUENCE [LARGE SCALE GENOMIC DNA]</scope>
    <source>
        <strain>CC9605</strain>
    </source>
</reference>
<gene>
    <name evidence="1" type="primary">argG</name>
    <name type="ordered locus">Syncc9605_2679</name>
</gene>
<dbReference type="EC" id="6.3.4.5" evidence="1"/>
<dbReference type="EMBL" id="CP000110">
    <property type="protein sequence ID" value="ABB36404.1"/>
    <property type="molecule type" value="Genomic_DNA"/>
</dbReference>
<dbReference type="RefSeq" id="WP_011365599.1">
    <property type="nucleotide sequence ID" value="NC_007516.1"/>
</dbReference>
<dbReference type="SMR" id="Q3AG78"/>
<dbReference type="STRING" id="110662.Syncc9605_2679"/>
<dbReference type="KEGG" id="syd:Syncc9605_2679"/>
<dbReference type="eggNOG" id="COG0137">
    <property type="taxonomic scope" value="Bacteria"/>
</dbReference>
<dbReference type="HOGENOM" id="CLU_032784_4_2_3"/>
<dbReference type="OrthoDB" id="9801641at2"/>
<dbReference type="UniPathway" id="UPA00068">
    <property type="reaction ID" value="UER00113"/>
</dbReference>
<dbReference type="GO" id="GO:0005737">
    <property type="term" value="C:cytoplasm"/>
    <property type="evidence" value="ECO:0007669"/>
    <property type="project" value="UniProtKB-SubCell"/>
</dbReference>
<dbReference type="GO" id="GO:0004055">
    <property type="term" value="F:argininosuccinate synthase activity"/>
    <property type="evidence" value="ECO:0007669"/>
    <property type="project" value="UniProtKB-UniRule"/>
</dbReference>
<dbReference type="GO" id="GO:0005524">
    <property type="term" value="F:ATP binding"/>
    <property type="evidence" value="ECO:0007669"/>
    <property type="project" value="UniProtKB-UniRule"/>
</dbReference>
<dbReference type="GO" id="GO:0000053">
    <property type="term" value="P:argininosuccinate metabolic process"/>
    <property type="evidence" value="ECO:0007669"/>
    <property type="project" value="TreeGrafter"/>
</dbReference>
<dbReference type="GO" id="GO:0006526">
    <property type="term" value="P:L-arginine biosynthetic process"/>
    <property type="evidence" value="ECO:0007669"/>
    <property type="project" value="UniProtKB-UniRule"/>
</dbReference>
<dbReference type="GO" id="GO:0000050">
    <property type="term" value="P:urea cycle"/>
    <property type="evidence" value="ECO:0007669"/>
    <property type="project" value="TreeGrafter"/>
</dbReference>
<dbReference type="CDD" id="cd01999">
    <property type="entry name" value="ASS"/>
    <property type="match status" value="1"/>
</dbReference>
<dbReference type="FunFam" id="3.40.50.620:FF:000019">
    <property type="entry name" value="Argininosuccinate synthase"/>
    <property type="match status" value="1"/>
</dbReference>
<dbReference type="FunFam" id="3.90.1260.10:FF:000007">
    <property type="entry name" value="Argininosuccinate synthase"/>
    <property type="match status" value="1"/>
</dbReference>
<dbReference type="Gene3D" id="3.90.1260.10">
    <property type="entry name" value="Argininosuccinate synthetase, chain A, domain 2"/>
    <property type="match status" value="1"/>
</dbReference>
<dbReference type="Gene3D" id="3.40.50.620">
    <property type="entry name" value="HUPs"/>
    <property type="match status" value="1"/>
</dbReference>
<dbReference type="Gene3D" id="1.20.5.470">
    <property type="entry name" value="Single helix bin"/>
    <property type="match status" value="1"/>
</dbReference>
<dbReference type="HAMAP" id="MF_00005">
    <property type="entry name" value="Arg_succ_synth_type1"/>
    <property type="match status" value="1"/>
</dbReference>
<dbReference type="InterPro" id="IPR048268">
    <property type="entry name" value="Arginosuc_syn_C"/>
</dbReference>
<dbReference type="InterPro" id="IPR048267">
    <property type="entry name" value="Arginosuc_syn_N"/>
</dbReference>
<dbReference type="InterPro" id="IPR001518">
    <property type="entry name" value="Arginosuc_synth"/>
</dbReference>
<dbReference type="InterPro" id="IPR018223">
    <property type="entry name" value="Arginosuc_synth_CS"/>
</dbReference>
<dbReference type="InterPro" id="IPR023434">
    <property type="entry name" value="Arginosuc_synth_type_1_subfam"/>
</dbReference>
<dbReference type="InterPro" id="IPR024074">
    <property type="entry name" value="AS_cat/multimer_dom_body"/>
</dbReference>
<dbReference type="InterPro" id="IPR014729">
    <property type="entry name" value="Rossmann-like_a/b/a_fold"/>
</dbReference>
<dbReference type="NCBIfam" id="TIGR00032">
    <property type="entry name" value="argG"/>
    <property type="match status" value="1"/>
</dbReference>
<dbReference type="NCBIfam" id="NF001770">
    <property type="entry name" value="PRK00509.1"/>
    <property type="match status" value="1"/>
</dbReference>
<dbReference type="PANTHER" id="PTHR11587">
    <property type="entry name" value="ARGININOSUCCINATE SYNTHASE"/>
    <property type="match status" value="1"/>
</dbReference>
<dbReference type="PANTHER" id="PTHR11587:SF2">
    <property type="entry name" value="ARGININOSUCCINATE SYNTHASE"/>
    <property type="match status" value="1"/>
</dbReference>
<dbReference type="Pfam" id="PF20979">
    <property type="entry name" value="Arginosuc_syn_C"/>
    <property type="match status" value="1"/>
</dbReference>
<dbReference type="Pfam" id="PF00764">
    <property type="entry name" value="Arginosuc_synth"/>
    <property type="match status" value="1"/>
</dbReference>
<dbReference type="SUPFAM" id="SSF52402">
    <property type="entry name" value="Adenine nucleotide alpha hydrolases-like"/>
    <property type="match status" value="1"/>
</dbReference>
<dbReference type="SUPFAM" id="SSF69864">
    <property type="entry name" value="Argininosuccinate synthetase, C-terminal domain"/>
    <property type="match status" value="1"/>
</dbReference>
<dbReference type="PROSITE" id="PS00564">
    <property type="entry name" value="ARGININOSUCCIN_SYN_1"/>
    <property type="match status" value="1"/>
</dbReference>
<dbReference type="PROSITE" id="PS00565">
    <property type="entry name" value="ARGININOSUCCIN_SYN_2"/>
    <property type="match status" value="1"/>
</dbReference>